<sequence length="294" mass="32191">MRALRAGLTLALGAGLGAAAEHWRRREGKAPGLLGRVPLLPVVAADLPALPGGPAGGTGELAKYGLPGVAQLRSRESYVLSYDPRTRGALWVLEQLRPERLRGDGDRSACDFREDDSVHAYHRATNADYRGSGFDRGHLAAAANHRWSQRAMDDTFYLSNVAPQVPHLNQNAWNNLERYSRSLTRTYQNVYVCTGPLFLPRTEADGKSYVKYQVIGKNHVAVPTHFFKVLILEAAGGQIELRSYVMPNAPVDETIPLERFLVPIESIERASGLLFVPNILARAGNLKAITAGSK</sequence>
<name>NUCG_MOUSE</name>
<proteinExistence type="evidence at protein level"/>
<evidence type="ECO:0000250" key="1"/>
<evidence type="ECO:0000250" key="2">
    <source>
        <dbReference type="UniProtKB" id="Q14249"/>
    </source>
</evidence>
<evidence type="ECO:0000255" key="3">
    <source>
        <dbReference type="PROSITE-ProRule" id="PRU10047"/>
    </source>
</evidence>
<evidence type="ECO:0000269" key="4">
    <source>
    </source>
</evidence>
<evidence type="ECO:0000269" key="5">
    <source>
    </source>
</evidence>
<evidence type="ECO:0000269" key="6">
    <source>
    </source>
</evidence>
<evidence type="ECO:0000269" key="7">
    <source>
    </source>
</evidence>
<evidence type="ECO:0000305" key="8"/>
<evidence type="ECO:0007744" key="9">
    <source>
        <dbReference type="PDB" id="6LYF"/>
    </source>
</evidence>
<evidence type="ECO:0007744" key="10">
    <source>
        <dbReference type="PDB" id="6M3F"/>
    </source>
</evidence>
<evidence type="ECO:0007744" key="11">
    <source>
        <dbReference type="PDB" id="6M3T"/>
    </source>
</evidence>
<evidence type="ECO:0007744" key="12">
    <source>
        <dbReference type="PDB" id="6NJT"/>
    </source>
</evidence>
<evidence type="ECO:0007744" key="13">
    <source>
        <dbReference type="PDB" id="6NJU"/>
    </source>
</evidence>
<evidence type="ECO:0007829" key="14">
    <source>
        <dbReference type="PDB" id="6LYF"/>
    </source>
</evidence>
<evidence type="ECO:0007829" key="15">
    <source>
        <dbReference type="PDB" id="6M3F"/>
    </source>
</evidence>
<evidence type="ECO:0007829" key="16">
    <source>
        <dbReference type="PDB" id="6M3U"/>
    </source>
</evidence>
<evidence type="ECO:0007829" key="17">
    <source>
        <dbReference type="PDB" id="6NJT"/>
    </source>
</evidence>
<protein>
    <recommendedName>
        <fullName>Endonuclease G, mitochondrial</fullName>
        <shortName>Endo G</shortName>
        <ecNumber>3.1.30.-</ecNumber>
    </recommendedName>
</protein>
<comment type="function">
    <text evidence="2 4 5 7">Endonuclease that preferentially catalyzes the cleavage of double-stranded 5-hydroxymethylcytosine (5hmC)-modified DNA (PubMed:25355512, PubMed:32095813). The 5hmC-modified nucleotide does not increase the binding affinity, but instead increases the efficiency of cutting and specifies the site of cleavage for the modified DNAs (PubMed:32095813). Shows significantly higher affinity for four-stranded Holliday junction over duplex and single-stranded DNAs (PubMed:32095813). Promotes conservative recombination when the DNA is 5hmC-modified (PubMed:25355512). Promotes autophagy through the suppression of mTOR by its phosphorylation-mediated interaction with YWHAG and its endonuclease activity-mediated DNA damage response (PubMed:33473107). GSK3-beta mediated phosphorylation of ENDOG enhances its interaction with YWHAG, leading to the release of TSC2 and PIK3C3 from YWHAG resulting in mTOR pathway suppression and autophagy initiation (By similarity). Promotes cleavage of mtDNA in response to oxidative and nitrosative stress, in turn inducing compensatory mtDNA replication (By similarity).</text>
</comment>
<comment type="cofactor">
    <cofactor evidence="5 6">
        <name>Mg(2+)</name>
        <dbReference type="ChEBI" id="CHEBI:18420"/>
    </cofactor>
</comment>
<comment type="subunit">
    <text evidence="2 5 6">Homodimer; disulfide-linked (PubMed:32095813, PubMed:32192768). Homodimerization is essential for its activity (PubMed:32192768). Interacts with YWHAG (By similarity).</text>
</comment>
<comment type="subcellular location">
    <subcellularLocation>
        <location evidence="2">Mitochondrion</location>
    </subcellularLocation>
</comment>
<comment type="PTM">
    <text evidence="2">GSK3-beta-mediated phosphorylation at Thr-125 is necessary for its interaction with YWHAG and the induction of autophagy.</text>
</comment>
<comment type="similarity">
    <text evidence="8">Belongs to the DNA/RNA non-specific endonuclease family.</text>
</comment>
<comment type="sequence caution" evidence="8">
    <conflict type="erroneous initiation">
        <sequence resource="EMBL-CDS" id="CAA67768"/>
    </conflict>
</comment>
<reference key="1">
    <citation type="journal article" date="1997" name="DNA Cell Biol.">
        <title>Characterization and expression of the mouse endonuclease G gene.</title>
        <authorList>
            <person name="Prats E."/>
            <person name="Noel M."/>
            <person name="Letourneau J."/>
            <person name="Tiranti V."/>
            <person name="Vaque J."/>
            <person name="Debon R."/>
            <person name="Zeviani M."/>
            <person name="Cornudella L."/>
            <person name="Ruiz-Carrillo A."/>
        </authorList>
    </citation>
    <scope>NUCLEOTIDE SEQUENCE [GENOMIC DNA / MRNA]</scope>
    <source>
        <strain>129/Sv</strain>
        <strain>BALB/cJ</strain>
        <tissue>Brain</tissue>
    </source>
</reference>
<reference key="2">
    <citation type="submission" date="1998-03" db="EMBL/GenBank/DDBJ databases">
        <authorList>
            <person name="Matsuda T."/>
        </authorList>
    </citation>
    <scope>NUCLEOTIDE SEQUENCE</scope>
    <source>
        <strain>C57BL/6J</strain>
        <tissue>Heart</tissue>
    </source>
</reference>
<reference key="3">
    <citation type="journal article" date="2004" name="Genome Res.">
        <title>The status, quality, and expansion of the NIH full-length cDNA project: the Mammalian Gene Collection (MGC).</title>
        <authorList>
            <consortium name="The MGC Project Team"/>
        </authorList>
    </citation>
    <scope>NUCLEOTIDE SEQUENCE [LARGE SCALE MRNA]</scope>
    <source>
        <strain>C57BL/6J</strain>
        <tissue>Mammary gland</tissue>
    </source>
</reference>
<reference key="4">
    <citation type="journal article" date="2010" name="Cell">
        <title>A tissue-specific atlas of mouse protein phosphorylation and expression.</title>
        <authorList>
            <person name="Huttlin E.L."/>
            <person name="Jedrychowski M.P."/>
            <person name="Elias J.E."/>
            <person name="Goswami T."/>
            <person name="Rad R."/>
            <person name="Beausoleil S.A."/>
            <person name="Villen J."/>
            <person name="Haas W."/>
            <person name="Sowa M.E."/>
            <person name="Gygi S.P."/>
        </authorList>
    </citation>
    <scope>IDENTIFICATION BY MASS SPECTROMETRY [LARGE SCALE ANALYSIS]</scope>
    <source>
        <tissue>Brain</tissue>
        <tissue>Brown adipose tissue</tissue>
        <tissue>Heart</tissue>
        <tissue>Kidney</tissue>
        <tissue>Liver</tissue>
        <tissue>Spleen</tissue>
    </source>
</reference>
<reference key="5">
    <citation type="journal article" date="2014" name="Nucleic Acids Res.">
        <title>Endonuclease G preferentially cleaves 5-hydroxymethylcytosine-modified DNA creating a substrate for recombination.</title>
        <authorList>
            <person name="Robertson A.B."/>
            <person name="Robertson J."/>
            <person name="Fusser M."/>
            <person name="Klungland A."/>
        </authorList>
    </citation>
    <scope>FUNCTION</scope>
</reference>
<reference key="6">
    <citation type="journal article" date="2021" name="Nat. Commun.">
        <title>Endonuclease G promotes autophagy by suppressing mTOR signaling and activating the DNA damage response.</title>
        <authorList>
            <person name="Wang W."/>
            <person name="Li J."/>
            <person name="Tan J."/>
            <person name="Wang M."/>
            <person name="Yang J."/>
            <person name="Zhang Z.M."/>
            <person name="Li C."/>
            <person name="Basnakian A.G."/>
            <person name="Tang H.W."/>
            <person name="Perrimon N."/>
            <person name="Zhou Q."/>
        </authorList>
    </citation>
    <scope>FUNCTION</scope>
</reference>
<reference evidence="9 10 11" key="7">
    <citation type="journal article" date="2020" name="Biochem. Biophys. Res. Commun.">
        <title>Crystal structure of the mouse endonuclease G.</title>
        <authorList>
            <person name="Park K.H."/>
            <person name="Yoon S.M."/>
            <person name="Song H.N."/>
            <person name="Yang J.H."/>
            <person name="Ryu S.E."/>
            <person name="Woo E.J."/>
        </authorList>
    </citation>
    <scope>X-RAY CRYSTALLOGRAPHY (1.96 ANGSTROMS) OF 45-293 OF MUTANTS ALA-110 AND ALA-138</scope>
    <scope>FUNCTION</scope>
    <scope>SUBUNIT</scope>
    <scope>COFACTOR</scope>
    <scope>ACTIVE SITE</scope>
    <scope>METAL-BINDING SITES</scope>
    <scope>DISULFIDE BOND</scope>
    <scope>MUTAGENESIS OF ARG-107; CYS-110 AND HIS-138</scope>
</reference>
<reference evidence="12 13" key="8">
    <citation type="journal article" date="2020" name="Nucleic Acids Res.">
        <title>Structural adaptation of vertebrate endonuclease G for 5-hydroxymethylcytosine recognition and function.</title>
        <authorList>
            <person name="Vander Zanden C.M."/>
            <person name="Czarny R.S."/>
            <person name="Ho E.N."/>
            <person name="Robertson A.B."/>
            <person name="Ho P.S."/>
        </authorList>
    </citation>
    <scope>X-RAY CRYSTALLOGRAPHY (2.07 ANGSTROMS) OF 43-294 OF MUTANT ALA-138 IN COMPLEX WITH DNA</scope>
    <scope>FUNCTION</scope>
    <scope>SUBUNIT</scope>
    <scope>COFACTOR</scope>
    <scope>ACTIVE SITE</scope>
    <scope>METAL-BINDING SITES</scope>
    <scope>DISULFIDE BOND</scope>
    <scope>MUTAGENESIS OF CYS-110</scope>
</reference>
<gene>
    <name type="primary">Endog</name>
</gene>
<dbReference type="EC" id="3.1.30.-"/>
<dbReference type="EMBL" id="X99395">
    <property type="protein sequence ID" value="CAA67769.1"/>
    <property type="molecule type" value="Genomic_DNA"/>
</dbReference>
<dbReference type="EMBL" id="X99394">
    <property type="protein sequence ID" value="CAA67768.1"/>
    <property type="status" value="ALT_INIT"/>
    <property type="molecule type" value="mRNA"/>
</dbReference>
<dbReference type="EMBL" id="AB012108">
    <property type="protein sequence ID" value="BAA28168.1"/>
    <property type="molecule type" value="mRNA"/>
</dbReference>
<dbReference type="EMBL" id="BC030177">
    <property type="protein sequence ID" value="AAH30177.1"/>
    <property type="molecule type" value="mRNA"/>
</dbReference>
<dbReference type="CCDS" id="CCDS15872.1"/>
<dbReference type="RefSeq" id="NP_031957.1">
    <property type="nucleotide sequence ID" value="NM_007931.2"/>
</dbReference>
<dbReference type="PDB" id="6LYF">
    <property type="method" value="X-ray"/>
    <property type="resolution" value="2.80 A"/>
    <property type="chains" value="A/B/C/D=45-293"/>
</dbReference>
<dbReference type="PDB" id="6M3F">
    <property type="method" value="X-ray"/>
    <property type="resolution" value="1.96 A"/>
    <property type="chains" value="B/C=45-293"/>
</dbReference>
<dbReference type="PDB" id="6M3T">
    <property type="method" value="X-ray"/>
    <property type="resolution" value="2.38 A"/>
    <property type="chains" value="A/B=45-293"/>
</dbReference>
<dbReference type="PDB" id="6M3U">
    <property type="method" value="X-ray"/>
    <property type="resolution" value="2.32 A"/>
    <property type="chains" value="A/B/C/D=45-293"/>
</dbReference>
<dbReference type="PDB" id="6NJT">
    <property type="method" value="X-ray"/>
    <property type="resolution" value="2.07 A"/>
    <property type="chains" value="A/B=43-294"/>
</dbReference>
<dbReference type="PDB" id="6NJU">
    <property type="method" value="X-ray"/>
    <property type="resolution" value="2.35 A"/>
    <property type="chains" value="A/B/C/D=43-294"/>
</dbReference>
<dbReference type="PDBsum" id="6LYF"/>
<dbReference type="PDBsum" id="6M3F"/>
<dbReference type="PDBsum" id="6M3T"/>
<dbReference type="PDBsum" id="6M3U"/>
<dbReference type="PDBsum" id="6NJT"/>
<dbReference type="PDBsum" id="6NJU"/>
<dbReference type="SMR" id="O08600"/>
<dbReference type="BioGRID" id="199449">
    <property type="interactions" value="14"/>
</dbReference>
<dbReference type="FunCoup" id="O08600">
    <property type="interactions" value="859"/>
</dbReference>
<dbReference type="STRING" id="10090.ENSMUSP00000015481"/>
<dbReference type="iPTMnet" id="O08600"/>
<dbReference type="PhosphoSitePlus" id="O08600"/>
<dbReference type="SwissPalm" id="O08600"/>
<dbReference type="jPOST" id="O08600"/>
<dbReference type="PaxDb" id="10090-ENSMUSP00000015481"/>
<dbReference type="PeptideAtlas" id="O08600"/>
<dbReference type="ProteomicsDB" id="293777"/>
<dbReference type="Pumba" id="O08600"/>
<dbReference type="Antibodypedia" id="17709">
    <property type="antibodies" value="485 antibodies from 40 providers"/>
</dbReference>
<dbReference type="DNASU" id="13804"/>
<dbReference type="Ensembl" id="ENSMUST00000015481.6">
    <property type="protein sequence ID" value="ENSMUSP00000015481.6"/>
    <property type="gene ID" value="ENSMUSG00000015337.6"/>
</dbReference>
<dbReference type="GeneID" id="13804"/>
<dbReference type="KEGG" id="mmu:13804"/>
<dbReference type="UCSC" id="uc008jbk.1">
    <property type="organism name" value="mouse"/>
</dbReference>
<dbReference type="AGR" id="MGI:1261433"/>
<dbReference type="CTD" id="2021"/>
<dbReference type="MGI" id="MGI:1261433">
    <property type="gene designation" value="Endog"/>
</dbReference>
<dbReference type="VEuPathDB" id="HostDB:ENSMUSG00000015337"/>
<dbReference type="eggNOG" id="KOG3721">
    <property type="taxonomic scope" value="Eukaryota"/>
</dbReference>
<dbReference type="GeneTree" id="ENSGT00940000160987"/>
<dbReference type="HOGENOM" id="CLU_055174_0_1_1"/>
<dbReference type="InParanoid" id="O08600"/>
<dbReference type="OMA" id="YVMPNQV"/>
<dbReference type="OrthoDB" id="5418055at2759"/>
<dbReference type="PhylomeDB" id="O08600"/>
<dbReference type="TreeFam" id="TF105386"/>
<dbReference type="BioGRID-ORCS" id="13804">
    <property type="hits" value="1 hit in 77 CRISPR screens"/>
</dbReference>
<dbReference type="ChiTaRS" id="Endog">
    <property type="organism name" value="mouse"/>
</dbReference>
<dbReference type="PRO" id="PR:O08600"/>
<dbReference type="Proteomes" id="UP000000589">
    <property type="component" value="Chromosome 2"/>
</dbReference>
<dbReference type="RNAct" id="O08600">
    <property type="molecule type" value="protein"/>
</dbReference>
<dbReference type="Bgee" id="ENSMUSG00000015337">
    <property type="expression patterns" value="Expressed in heart right ventricle and 230 other cell types or tissues"/>
</dbReference>
<dbReference type="ExpressionAtlas" id="O08600">
    <property type="expression patterns" value="baseline and differential"/>
</dbReference>
<dbReference type="GO" id="GO:0005739">
    <property type="term" value="C:mitochondrion"/>
    <property type="evidence" value="ECO:0007005"/>
    <property type="project" value="MGI"/>
</dbReference>
<dbReference type="GO" id="GO:0043204">
    <property type="term" value="C:perikaryon"/>
    <property type="evidence" value="ECO:0007669"/>
    <property type="project" value="Ensembl"/>
</dbReference>
<dbReference type="GO" id="GO:0048471">
    <property type="term" value="C:perinuclear region of cytoplasm"/>
    <property type="evidence" value="ECO:0007669"/>
    <property type="project" value="Ensembl"/>
</dbReference>
<dbReference type="GO" id="GO:0004520">
    <property type="term" value="F:DNA endonuclease activity"/>
    <property type="evidence" value="ECO:0000314"/>
    <property type="project" value="UniProtKB"/>
</dbReference>
<dbReference type="GO" id="GO:0000287">
    <property type="term" value="F:magnesium ion binding"/>
    <property type="evidence" value="ECO:0000314"/>
    <property type="project" value="UniProtKB"/>
</dbReference>
<dbReference type="GO" id="GO:0003676">
    <property type="term" value="F:nucleic acid binding"/>
    <property type="evidence" value="ECO:0007669"/>
    <property type="project" value="InterPro"/>
</dbReference>
<dbReference type="GO" id="GO:0042803">
    <property type="term" value="F:protein homodimerization activity"/>
    <property type="evidence" value="ECO:0000315"/>
    <property type="project" value="UniProtKB"/>
</dbReference>
<dbReference type="GO" id="GO:0006309">
    <property type="term" value="P:apoptotic DNA fragmentation"/>
    <property type="evidence" value="ECO:0000315"/>
    <property type="project" value="MGI"/>
</dbReference>
<dbReference type="GO" id="GO:0071277">
    <property type="term" value="P:cellular response to calcium ion"/>
    <property type="evidence" value="ECO:0007669"/>
    <property type="project" value="Ensembl"/>
</dbReference>
<dbReference type="GO" id="GO:0071333">
    <property type="term" value="P:cellular response to glucose stimulus"/>
    <property type="evidence" value="ECO:0007669"/>
    <property type="project" value="Ensembl"/>
</dbReference>
<dbReference type="GO" id="GO:0071456">
    <property type="term" value="P:cellular response to hypoxia"/>
    <property type="evidence" value="ECO:0007669"/>
    <property type="project" value="Ensembl"/>
</dbReference>
<dbReference type="GO" id="GO:0034599">
    <property type="term" value="P:cellular response to oxidative stress"/>
    <property type="evidence" value="ECO:0007669"/>
    <property type="project" value="Ensembl"/>
</dbReference>
<dbReference type="GO" id="GO:0006308">
    <property type="term" value="P:DNA catabolic process"/>
    <property type="evidence" value="ECO:0000304"/>
    <property type="project" value="UniProtKB"/>
</dbReference>
<dbReference type="GO" id="GO:0006974">
    <property type="term" value="P:DNA damage response"/>
    <property type="evidence" value="ECO:0000250"/>
    <property type="project" value="UniProtKB"/>
</dbReference>
<dbReference type="GO" id="GO:0001701">
    <property type="term" value="P:in utero embryonic development"/>
    <property type="evidence" value="ECO:0000315"/>
    <property type="project" value="MGI"/>
</dbReference>
<dbReference type="GO" id="GO:0032043">
    <property type="term" value="P:mitochondrial DNA catabolic process"/>
    <property type="evidence" value="ECO:0000250"/>
    <property type="project" value="UniProtKB"/>
</dbReference>
<dbReference type="GO" id="GO:0032007">
    <property type="term" value="P:negative regulation of TOR signaling"/>
    <property type="evidence" value="ECO:0000315"/>
    <property type="project" value="UniProtKB"/>
</dbReference>
<dbReference type="GO" id="GO:1902512">
    <property type="term" value="P:positive regulation of apoptotic DNA fragmentation"/>
    <property type="evidence" value="ECO:0007669"/>
    <property type="project" value="Ensembl"/>
</dbReference>
<dbReference type="GO" id="GO:0043065">
    <property type="term" value="P:positive regulation of apoptotic process"/>
    <property type="evidence" value="ECO:0000315"/>
    <property type="project" value="MGI"/>
</dbReference>
<dbReference type="GO" id="GO:0010508">
    <property type="term" value="P:positive regulation of autophagy"/>
    <property type="evidence" value="ECO:0000315"/>
    <property type="project" value="UniProtKB"/>
</dbReference>
<dbReference type="GO" id="GO:1901300">
    <property type="term" value="P:positive regulation of hydrogen peroxide-mediated programmed cell death"/>
    <property type="evidence" value="ECO:0007669"/>
    <property type="project" value="Ensembl"/>
</dbReference>
<dbReference type="GO" id="GO:0090297">
    <property type="term" value="P:positive regulation of mitochondrial DNA replication"/>
    <property type="evidence" value="ECO:0000250"/>
    <property type="project" value="UniProtKB"/>
</dbReference>
<dbReference type="GO" id="GO:0046677">
    <property type="term" value="P:response to antibiotic"/>
    <property type="evidence" value="ECO:0000315"/>
    <property type="project" value="MGI"/>
</dbReference>
<dbReference type="GO" id="GO:0032355">
    <property type="term" value="P:response to estradiol"/>
    <property type="evidence" value="ECO:0007669"/>
    <property type="project" value="Ensembl"/>
</dbReference>
<dbReference type="GO" id="GO:0009612">
    <property type="term" value="P:response to mechanical stimulus"/>
    <property type="evidence" value="ECO:0007669"/>
    <property type="project" value="Ensembl"/>
</dbReference>
<dbReference type="GO" id="GO:0034612">
    <property type="term" value="P:response to tumor necrosis factor"/>
    <property type="evidence" value="ECO:0000315"/>
    <property type="project" value="MGI"/>
</dbReference>
<dbReference type="CDD" id="cd00091">
    <property type="entry name" value="NUC"/>
    <property type="match status" value="1"/>
</dbReference>
<dbReference type="FunFam" id="3.40.570.10:FF:000002">
    <property type="entry name" value="Endonuclease G, mitochondrial"/>
    <property type="match status" value="1"/>
</dbReference>
<dbReference type="Gene3D" id="3.40.570.10">
    <property type="entry name" value="Extracellular Endonuclease, subunit A"/>
    <property type="match status" value="1"/>
</dbReference>
<dbReference type="InterPro" id="IPR018524">
    <property type="entry name" value="DNA/RNA_endonuclease_AS"/>
</dbReference>
<dbReference type="InterPro" id="IPR044929">
    <property type="entry name" value="DNA/RNA_non-sp_Endonuclease_sf"/>
</dbReference>
<dbReference type="InterPro" id="IPR001604">
    <property type="entry name" value="Endo_G_ENPP1-like_dom"/>
</dbReference>
<dbReference type="InterPro" id="IPR020821">
    <property type="entry name" value="ENPP1-3/EXOG-like_nuc-like"/>
</dbReference>
<dbReference type="InterPro" id="IPR044925">
    <property type="entry name" value="His-Me_finger_sf"/>
</dbReference>
<dbReference type="InterPro" id="IPR040255">
    <property type="entry name" value="Non-specific_endonuclease"/>
</dbReference>
<dbReference type="PANTHER" id="PTHR13966:SF5">
    <property type="entry name" value="ENDONUCLEASE G, MITOCHONDRIAL"/>
    <property type="match status" value="1"/>
</dbReference>
<dbReference type="PANTHER" id="PTHR13966">
    <property type="entry name" value="ENDONUCLEASE RELATED"/>
    <property type="match status" value="1"/>
</dbReference>
<dbReference type="Pfam" id="PF01223">
    <property type="entry name" value="Endonuclease_NS"/>
    <property type="match status" value="1"/>
</dbReference>
<dbReference type="SMART" id="SM00892">
    <property type="entry name" value="Endonuclease_NS"/>
    <property type="match status" value="1"/>
</dbReference>
<dbReference type="SMART" id="SM00477">
    <property type="entry name" value="NUC"/>
    <property type="match status" value="1"/>
</dbReference>
<dbReference type="SUPFAM" id="SSF54060">
    <property type="entry name" value="His-Me finger endonucleases"/>
    <property type="match status" value="1"/>
</dbReference>
<dbReference type="PROSITE" id="PS01070">
    <property type="entry name" value="NUCLEASE_NON_SPEC"/>
    <property type="match status" value="1"/>
</dbReference>
<feature type="transit peptide" description="Mitochondrion" evidence="1">
    <location>
        <begin position="1"/>
        <end position="44"/>
    </location>
</feature>
<feature type="chain" id="PRO_0000019919" description="Endonuclease G, mitochondrial">
    <location>
        <begin position="45"/>
        <end position="294"/>
    </location>
</feature>
<feature type="region of interest" description="Essential for deoxyribonuclease activity" evidence="6">
    <location>
        <begin position="283"/>
        <end position="293"/>
    </location>
</feature>
<feature type="active site" description="Proton acceptor" evidence="3 5 6">
    <location>
        <position position="138"/>
    </location>
</feature>
<feature type="binding site" evidence="5 6 9 12">
    <location>
        <position position="169"/>
    </location>
    <ligand>
        <name>Mg(2+)</name>
        <dbReference type="ChEBI" id="CHEBI:18420"/>
        <note>catalytic</note>
    </ligand>
</feature>
<feature type="site" description="Essential for catalytic activity" evidence="6">
    <location>
        <position position="107"/>
    </location>
</feature>
<feature type="modified residue" description="Phosphothreonine" evidence="2">
    <location>
        <position position="125"/>
    </location>
</feature>
<feature type="disulfide bond" description="Interchain" evidence="5 6">
    <location>
        <position position="110"/>
    </location>
</feature>
<feature type="mutagenesis site" description="Loss of deoxyribonuclease activity." evidence="6">
    <original>R</original>
    <variation>Q</variation>
    <location>
        <position position="107"/>
    </location>
</feature>
<feature type="mutagenesis site" description="Loss of homodimerization and deoxyribonuclease activity. Shows a 1.3-fold higher rate for the cleavage of the 5hmC-modified DNA junction over unmodified junction, as compared to the 1.8-fold difference seen in the wild type enzyme." evidence="5 6">
    <original>C</original>
    <variation>A</variation>
    <location>
        <position position="110"/>
    </location>
</feature>
<feature type="mutagenesis site" description="Shows a 2.1-fold higher rate for the cleavage of the 5hmC-modified DNA junction over unmodified junction, as compared to the 1.8-fold difference seen in the wild type enzyme." evidence="5">
    <original>C</original>
    <variation>S</variation>
    <location>
        <position position="110"/>
    </location>
</feature>
<feature type="mutagenesis site" description="Catalytically inactive." evidence="5 6">
    <original>H</original>
    <variation>A</variation>
    <location>
        <position position="138"/>
    </location>
</feature>
<feature type="helix" evidence="17">
    <location>
        <begin position="61"/>
        <end position="64"/>
    </location>
</feature>
<feature type="strand" evidence="15">
    <location>
        <begin position="71"/>
        <end position="74"/>
    </location>
</feature>
<feature type="strand" evidence="15">
    <location>
        <begin position="79"/>
        <end position="83"/>
    </location>
</feature>
<feature type="turn" evidence="15">
    <location>
        <begin position="84"/>
        <end position="87"/>
    </location>
</feature>
<feature type="strand" evidence="15">
    <location>
        <begin position="88"/>
        <end position="96"/>
    </location>
</feature>
<feature type="helix" evidence="15">
    <location>
        <begin position="98"/>
        <end position="101"/>
    </location>
</feature>
<feature type="strand" evidence="15">
    <location>
        <begin position="102"/>
        <end position="105"/>
    </location>
</feature>
<feature type="strand" evidence="14">
    <location>
        <begin position="116"/>
        <end position="118"/>
    </location>
</feature>
<feature type="helix" evidence="15">
    <location>
        <begin position="120"/>
        <end position="122"/>
    </location>
</feature>
<feature type="helix" evidence="15">
    <location>
        <begin position="126"/>
        <end position="129"/>
    </location>
</feature>
<feature type="turn" evidence="16">
    <location>
        <begin position="130"/>
        <end position="133"/>
    </location>
</feature>
<feature type="strand" evidence="15">
    <location>
        <begin position="135"/>
        <end position="140"/>
    </location>
</feature>
<feature type="helix" evidence="15">
    <location>
        <begin position="142"/>
        <end position="145"/>
    </location>
</feature>
<feature type="helix" evidence="15">
    <location>
        <begin position="149"/>
        <end position="154"/>
    </location>
</feature>
<feature type="helix" evidence="15">
    <location>
        <begin position="158"/>
        <end position="160"/>
    </location>
</feature>
<feature type="strand" evidence="15">
    <location>
        <begin position="161"/>
        <end position="164"/>
    </location>
</feature>
<feature type="helix" evidence="15">
    <location>
        <begin position="166"/>
        <end position="170"/>
    </location>
</feature>
<feature type="helix" evidence="15">
    <location>
        <begin position="172"/>
        <end position="182"/>
    </location>
</feature>
<feature type="helix" evidence="15">
    <location>
        <begin position="183"/>
        <end position="185"/>
    </location>
</feature>
<feature type="strand" evidence="15">
    <location>
        <begin position="187"/>
        <end position="197"/>
    </location>
</feature>
<feature type="strand" evidence="15">
    <location>
        <begin position="208"/>
        <end position="215"/>
    </location>
</feature>
<feature type="turn" evidence="15">
    <location>
        <begin position="216"/>
        <end position="219"/>
    </location>
</feature>
<feature type="strand" evidence="15">
    <location>
        <begin position="224"/>
        <end position="233"/>
    </location>
</feature>
<feature type="helix" evidence="15">
    <location>
        <begin position="235"/>
        <end position="237"/>
    </location>
</feature>
<feature type="strand" evidence="15">
    <location>
        <begin position="239"/>
        <end position="249"/>
    </location>
</feature>
<feature type="helix" evidence="15">
    <location>
        <begin position="257"/>
        <end position="260"/>
    </location>
</feature>
<feature type="helix" evidence="15">
    <location>
        <begin position="264"/>
        <end position="271"/>
    </location>
</feature>
<feature type="helix" evidence="15">
    <location>
        <begin position="276"/>
        <end position="280"/>
    </location>
</feature>
<feature type="strand" evidence="16">
    <location>
        <begin position="282"/>
        <end position="285"/>
    </location>
</feature>
<organism>
    <name type="scientific">Mus musculus</name>
    <name type="common">Mouse</name>
    <dbReference type="NCBI Taxonomy" id="10090"/>
    <lineage>
        <taxon>Eukaryota</taxon>
        <taxon>Metazoa</taxon>
        <taxon>Chordata</taxon>
        <taxon>Craniata</taxon>
        <taxon>Vertebrata</taxon>
        <taxon>Euteleostomi</taxon>
        <taxon>Mammalia</taxon>
        <taxon>Eutheria</taxon>
        <taxon>Euarchontoglires</taxon>
        <taxon>Glires</taxon>
        <taxon>Rodentia</taxon>
        <taxon>Myomorpha</taxon>
        <taxon>Muroidea</taxon>
        <taxon>Muridae</taxon>
        <taxon>Murinae</taxon>
        <taxon>Mus</taxon>
        <taxon>Mus</taxon>
    </lineage>
</organism>
<keyword id="KW-0002">3D-structure</keyword>
<keyword id="KW-1015">Disulfide bond</keyword>
<keyword id="KW-0255">Endonuclease</keyword>
<keyword id="KW-0378">Hydrolase</keyword>
<keyword id="KW-0460">Magnesium</keyword>
<keyword id="KW-0479">Metal-binding</keyword>
<keyword id="KW-0496">Mitochondrion</keyword>
<keyword id="KW-0540">Nuclease</keyword>
<keyword id="KW-0597">Phosphoprotein</keyword>
<keyword id="KW-1185">Reference proteome</keyword>
<keyword id="KW-0809">Transit peptide</keyword>
<accession>O08600</accession>